<organism>
    <name type="scientific">Trichodesmium erythraeum (strain IMS101)</name>
    <dbReference type="NCBI Taxonomy" id="203124"/>
    <lineage>
        <taxon>Bacteria</taxon>
        <taxon>Bacillati</taxon>
        <taxon>Cyanobacteriota</taxon>
        <taxon>Cyanophyceae</taxon>
        <taxon>Oscillatoriophycideae</taxon>
        <taxon>Oscillatoriales</taxon>
        <taxon>Microcoleaceae</taxon>
        <taxon>Trichodesmium</taxon>
    </lineage>
</organism>
<name>RL1_TRIEI</name>
<comment type="function">
    <text evidence="1">Binds directly to 23S rRNA. The L1 stalk is quite mobile in the ribosome, and is involved in E site tRNA release.</text>
</comment>
<comment type="function">
    <text evidence="1">Protein L1 is also a translational repressor protein, it controls the translation of the L11 operon by binding to its mRNA.</text>
</comment>
<comment type="subunit">
    <text evidence="1">Part of the 50S ribosomal subunit.</text>
</comment>
<comment type="similarity">
    <text evidence="1">Belongs to the universal ribosomal protein uL1 family.</text>
</comment>
<evidence type="ECO:0000255" key="1">
    <source>
        <dbReference type="HAMAP-Rule" id="MF_01318"/>
    </source>
</evidence>
<evidence type="ECO:0000305" key="2"/>
<keyword id="KW-0678">Repressor</keyword>
<keyword id="KW-0687">Ribonucleoprotein</keyword>
<keyword id="KW-0689">Ribosomal protein</keyword>
<keyword id="KW-0694">RNA-binding</keyword>
<keyword id="KW-0699">rRNA-binding</keyword>
<keyword id="KW-0810">Translation regulation</keyword>
<keyword id="KW-0820">tRNA-binding</keyword>
<protein>
    <recommendedName>
        <fullName evidence="1">Large ribosomal subunit protein uL1</fullName>
    </recommendedName>
    <alternativeName>
        <fullName evidence="2">50S ribosomal protein L1</fullName>
    </alternativeName>
</protein>
<accession>Q119S7</accession>
<feature type="chain" id="PRO_0000308135" description="Large ribosomal subunit protein uL1">
    <location>
        <begin position="1"/>
        <end position="238"/>
    </location>
</feature>
<gene>
    <name evidence="1" type="primary">rplA</name>
    <name evidence="1" type="synonym">rpl1</name>
    <name type="ordered locus">Tery_0264</name>
</gene>
<dbReference type="EMBL" id="CP000393">
    <property type="protein sequence ID" value="ABG49747.1"/>
    <property type="molecule type" value="Genomic_DNA"/>
</dbReference>
<dbReference type="RefSeq" id="WP_011610143.1">
    <property type="nucleotide sequence ID" value="NC_008312.1"/>
</dbReference>
<dbReference type="SMR" id="Q119S7"/>
<dbReference type="STRING" id="203124.Tery_0264"/>
<dbReference type="KEGG" id="ter:Tery_0264"/>
<dbReference type="eggNOG" id="COG0081">
    <property type="taxonomic scope" value="Bacteria"/>
</dbReference>
<dbReference type="HOGENOM" id="CLU_062853_0_0_3"/>
<dbReference type="OrthoDB" id="9803740at2"/>
<dbReference type="GO" id="GO:0015934">
    <property type="term" value="C:large ribosomal subunit"/>
    <property type="evidence" value="ECO:0007669"/>
    <property type="project" value="InterPro"/>
</dbReference>
<dbReference type="GO" id="GO:0019843">
    <property type="term" value="F:rRNA binding"/>
    <property type="evidence" value="ECO:0007669"/>
    <property type="project" value="UniProtKB-UniRule"/>
</dbReference>
<dbReference type="GO" id="GO:0003735">
    <property type="term" value="F:structural constituent of ribosome"/>
    <property type="evidence" value="ECO:0007669"/>
    <property type="project" value="InterPro"/>
</dbReference>
<dbReference type="GO" id="GO:0000049">
    <property type="term" value="F:tRNA binding"/>
    <property type="evidence" value="ECO:0007669"/>
    <property type="project" value="UniProtKB-KW"/>
</dbReference>
<dbReference type="GO" id="GO:0006417">
    <property type="term" value="P:regulation of translation"/>
    <property type="evidence" value="ECO:0007669"/>
    <property type="project" value="UniProtKB-KW"/>
</dbReference>
<dbReference type="GO" id="GO:0006412">
    <property type="term" value="P:translation"/>
    <property type="evidence" value="ECO:0007669"/>
    <property type="project" value="UniProtKB-UniRule"/>
</dbReference>
<dbReference type="CDD" id="cd00403">
    <property type="entry name" value="Ribosomal_L1"/>
    <property type="match status" value="1"/>
</dbReference>
<dbReference type="FunFam" id="3.40.50.790:FF:000001">
    <property type="entry name" value="50S ribosomal protein L1"/>
    <property type="match status" value="1"/>
</dbReference>
<dbReference type="Gene3D" id="3.30.190.20">
    <property type="match status" value="1"/>
</dbReference>
<dbReference type="Gene3D" id="3.40.50.790">
    <property type="match status" value="1"/>
</dbReference>
<dbReference type="HAMAP" id="MF_01318_B">
    <property type="entry name" value="Ribosomal_uL1_B"/>
    <property type="match status" value="1"/>
</dbReference>
<dbReference type="InterPro" id="IPR005878">
    <property type="entry name" value="Ribosom_uL1_bac-type"/>
</dbReference>
<dbReference type="InterPro" id="IPR002143">
    <property type="entry name" value="Ribosomal_uL1"/>
</dbReference>
<dbReference type="InterPro" id="IPR023674">
    <property type="entry name" value="Ribosomal_uL1-like"/>
</dbReference>
<dbReference type="InterPro" id="IPR028364">
    <property type="entry name" value="Ribosomal_uL1/biogenesis"/>
</dbReference>
<dbReference type="InterPro" id="IPR016095">
    <property type="entry name" value="Ribosomal_uL1_3-a/b-sand"/>
</dbReference>
<dbReference type="InterPro" id="IPR023673">
    <property type="entry name" value="Ribosomal_uL1_CS"/>
</dbReference>
<dbReference type="NCBIfam" id="TIGR01169">
    <property type="entry name" value="rplA_bact"/>
    <property type="match status" value="1"/>
</dbReference>
<dbReference type="PANTHER" id="PTHR36427">
    <property type="entry name" value="54S RIBOSOMAL PROTEIN L1, MITOCHONDRIAL"/>
    <property type="match status" value="1"/>
</dbReference>
<dbReference type="PANTHER" id="PTHR36427:SF3">
    <property type="entry name" value="LARGE RIBOSOMAL SUBUNIT PROTEIN UL1M"/>
    <property type="match status" value="1"/>
</dbReference>
<dbReference type="Pfam" id="PF00687">
    <property type="entry name" value="Ribosomal_L1"/>
    <property type="match status" value="1"/>
</dbReference>
<dbReference type="PIRSF" id="PIRSF002155">
    <property type="entry name" value="Ribosomal_L1"/>
    <property type="match status" value="1"/>
</dbReference>
<dbReference type="SUPFAM" id="SSF56808">
    <property type="entry name" value="Ribosomal protein L1"/>
    <property type="match status" value="1"/>
</dbReference>
<dbReference type="PROSITE" id="PS01199">
    <property type="entry name" value="RIBOSOMAL_L1"/>
    <property type="match status" value="1"/>
</dbReference>
<reference key="1">
    <citation type="journal article" date="2015" name="Proc. Natl. Acad. Sci. U.S.A.">
        <title>Trichodesmium genome maintains abundant, widespread noncoding DNA in situ, despite oligotrophic lifestyle.</title>
        <authorList>
            <person name="Walworth N."/>
            <person name="Pfreundt U."/>
            <person name="Nelson W.C."/>
            <person name="Mincer T."/>
            <person name="Heidelberg J.F."/>
            <person name="Fu F."/>
            <person name="Waterbury J.B."/>
            <person name="Glavina del Rio T."/>
            <person name="Goodwin L."/>
            <person name="Kyrpides N.C."/>
            <person name="Land M.L."/>
            <person name="Woyke T."/>
            <person name="Hutchins D.A."/>
            <person name="Hess W.R."/>
            <person name="Webb E.A."/>
        </authorList>
    </citation>
    <scope>NUCLEOTIDE SEQUENCE [LARGE SCALE GENOMIC DNA]</scope>
    <source>
        <strain>IMS101</strain>
    </source>
</reference>
<sequence>MPKKISRRLQELRKKVEERPYEPKEALQLLKETATAKFLEAAEAHVRLGIDPKYTDQQLRTTVALPKGTGQTIRIAVIAKGEKVNEALAAGADLAGSEELIEQISKGMMEFDRLIATPDVMPQVAKLGRLLGPRGLMPSPKGGTVTFDLTKAIDEFKAGKLEFRADRSGIVHVMFGKTSFSVEDLLINLKALQECIDRNRPSGAKGRYWRTIFVSATMGPSIEIDVSSLQDLKLTEAA</sequence>
<proteinExistence type="inferred from homology"/>